<organism>
    <name type="scientific">Escherichia coli O6:K15:H31 (strain 536 / UPEC)</name>
    <dbReference type="NCBI Taxonomy" id="362663"/>
    <lineage>
        <taxon>Bacteria</taxon>
        <taxon>Pseudomonadati</taxon>
        <taxon>Pseudomonadota</taxon>
        <taxon>Gammaproteobacteria</taxon>
        <taxon>Enterobacterales</taxon>
        <taxon>Enterobacteriaceae</taxon>
        <taxon>Escherichia</taxon>
    </lineage>
</organism>
<name>RIHB_ECOL5</name>
<feature type="chain" id="PRO_1000024412" description="Pyrimidine-specific ribonucleoside hydrolase RihB">
    <location>
        <begin position="1"/>
        <end position="313"/>
    </location>
</feature>
<feature type="active site" description="Proton acceptor" evidence="1">
    <location>
        <position position="11"/>
    </location>
</feature>
<feature type="binding site" evidence="1">
    <location>
        <position position="11"/>
    </location>
    <ligand>
        <name>Ca(2+)</name>
        <dbReference type="ChEBI" id="CHEBI:29108"/>
    </ligand>
</feature>
<feature type="binding site" evidence="1">
    <location>
        <position position="16"/>
    </location>
    <ligand>
        <name>Ca(2+)</name>
        <dbReference type="ChEBI" id="CHEBI:29108"/>
    </ligand>
</feature>
<feature type="binding site" evidence="1">
    <location>
        <position position="124"/>
    </location>
    <ligand>
        <name>Ca(2+)</name>
        <dbReference type="ChEBI" id="CHEBI:29108"/>
    </ligand>
</feature>
<feature type="binding site" evidence="1">
    <location>
        <position position="227"/>
    </location>
    <ligand>
        <name>substrate</name>
    </ligand>
</feature>
<feature type="binding site" evidence="1">
    <location>
        <position position="239"/>
    </location>
    <ligand>
        <name>substrate</name>
    </ligand>
</feature>
<feature type="binding site" evidence="1">
    <location>
        <position position="240"/>
    </location>
    <ligand>
        <name>Ca(2+)</name>
        <dbReference type="ChEBI" id="CHEBI:29108"/>
    </ligand>
</feature>
<sequence length="313" mass="33775">MEKRKIILDCDPGHDDAIAIMMAAKHPAIDLLGITIVAGNQTLDKTLINGLNVCQKLEINVPVYAGMPQPIMRQQIVADNIHGETGLDGPVFEPLTRQAENTHAVKYIIDTLMASDGDITLVPVGPLSNIAVAMRMQPAILPKIREIVLMGGAYGTGNFTPSAEFNIFADPEAARVVFTSGVPLVMMGLDLTNQTVCTPDVIARMERAGGPAGELFSDIMNFTLKTQFENYGLAGGPVHDATCIGYLINPDGIKTQEMYVEVDVNSGPCYGRTVCDELGVLGKPANTKVGITIDTDWFWGLVEECVRGYIKTH</sequence>
<proteinExistence type="inferred from homology"/>
<evidence type="ECO:0000255" key="1">
    <source>
        <dbReference type="HAMAP-Rule" id="MF_01433"/>
    </source>
</evidence>
<dbReference type="EC" id="3.2.2.8" evidence="1"/>
<dbReference type="EMBL" id="CP000247">
    <property type="protein sequence ID" value="ABG70201.1"/>
    <property type="molecule type" value="Genomic_DNA"/>
</dbReference>
<dbReference type="RefSeq" id="WP_000415422.1">
    <property type="nucleotide sequence ID" value="NC_008253.1"/>
</dbReference>
<dbReference type="SMR" id="Q0TFS8"/>
<dbReference type="GeneID" id="75056720"/>
<dbReference type="KEGG" id="ecp:ECP_2202"/>
<dbReference type="HOGENOM" id="CLU_036838_2_0_6"/>
<dbReference type="Proteomes" id="UP000009182">
    <property type="component" value="Chromosome"/>
</dbReference>
<dbReference type="GO" id="GO:0005829">
    <property type="term" value="C:cytosol"/>
    <property type="evidence" value="ECO:0007669"/>
    <property type="project" value="TreeGrafter"/>
</dbReference>
<dbReference type="GO" id="GO:0005509">
    <property type="term" value="F:calcium ion binding"/>
    <property type="evidence" value="ECO:0007669"/>
    <property type="project" value="UniProtKB-UniRule"/>
</dbReference>
<dbReference type="GO" id="GO:0008477">
    <property type="term" value="F:purine nucleosidase activity"/>
    <property type="evidence" value="ECO:0007669"/>
    <property type="project" value="TreeGrafter"/>
</dbReference>
<dbReference type="GO" id="GO:0045437">
    <property type="term" value="F:uridine nucleosidase activity"/>
    <property type="evidence" value="ECO:0007669"/>
    <property type="project" value="UniProtKB-ARBA"/>
</dbReference>
<dbReference type="GO" id="GO:0006152">
    <property type="term" value="P:purine nucleoside catabolic process"/>
    <property type="evidence" value="ECO:0007669"/>
    <property type="project" value="TreeGrafter"/>
</dbReference>
<dbReference type="GO" id="GO:0006206">
    <property type="term" value="P:pyrimidine nucleobase metabolic process"/>
    <property type="evidence" value="ECO:0007669"/>
    <property type="project" value="UniProtKB-UniRule"/>
</dbReference>
<dbReference type="GO" id="GO:0046133">
    <property type="term" value="P:pyrimidine ribonucleoside catabolic process"/>
    <property type="evidence" value="ECO:0007669"/>
    <property type="project" value="InterPro"/>
</dbReference>
<dbReference type="CDD" id="cd02651">
    <property type="entry name" value="nuc_hydro_IU_UC_XIUA"/>
    <property type="match status" value="1"/>
</dbReference>
<dbReference type="FunFam" id="3.90.245.10:FF:000003">
    <property type="entry name" value="Pyrimidine-specific ribonucleoside hydrolase RihB"/>
    <property type="match status" value="1"/>
</dbReference>
<dbReference type="Gene3D" id="3.90.245.10">
    <property type="entry name" value="Ribonucleoside hydrolase-like"/>
    <property type="match status" value="1"/>
</dbReference>
<dbReference type="HAMAP" id="MF_01433">
    <property type="entry name" value="Pyrim_hydro_RihB"/>
    <property type="match status" value="1"/>
</dbReference>
<dbReference type="InterPro" id="IPR015910">
    <property type="entry name" value="I/U_nuclsd_hydro_CS"/>
</dbReference>
<dbReference type="InterPro" id="IPR001910">
    <property type="entry name" value="Inosine/uridine_hydrolase_dom"/>
</dbReference>
<dbReference type="InterPro" id="IPR023186">
    <property type="entry name" value="IUNH"/>
</dbReference>
<dbReference type="InterPro" id="IPR022977">
    <property type="entry name" value="Pyrim_hydro_RihB"/>
</dbReference>
<dbReference type="InterPro" id="IPR036452">
    <property type="entry name" value="Ribo_hydro-like"/>
</dbReference>
<dbReference type="NCBIfam" id="NF007417">
    <property type="entry name" value="PRK09955.1"/>
    <property type="match status" value="1"/>
</dbReference>
<dbReference type="PANTHER" id="PTHR12304">
    <property type="entry name" value="INOSINE-URIDINE PREFERRING NUCLEOSIDE HYDROLASE"/>
    <property type="match status" value="1"/>
</dbReference>
<dbReference type="PANTHER" id="PTHR12304:SF4">
    <property type="entry name" value="URIDINE NUCLEOSIDASE"/>
    <property type="match status" value="1"/>
</dbReference>
<dbReference type="Pfam" id="PF01156">
    <property type="entry name" value="IU_nuc_hydro"/>
    <property type="match status" value="1"/>
</dbReference>
<dbReference type="SUPFAM" id="SSF53590">
    <property type="entry name" value="Nucleoside hydrolase"/>
    <property type="match status" value="1"/>
</dbReference>
<dbReference type="PROSITE" id="PS01247">
    <property type="entry name" value="IUNH"/>
    <property type="match status" value="1"/>
</dbReference>
<accession>Q0TFS8</accession>
<protein>
    <recommendedName>
        <fullName evidence="1">Pyrimidine-specific ribonucleoside hydrolase RihB</fullName>
        <ecNumber evidence="1">3.2.2.8</ecNumber>
    </recommendedName>
    <alternativeName>
        <fullName evidence="1">Cytidine/uridine-specific hydrolase</fullName>
    </alternativeName>
</protein>
<reference key="1">
    <citation type="journal article" date="2006" name="Mol. Microbiol.">
        <title>Role of pathogenicity island-associated integrases in the genome plasticity of uropathogenic Escherichia coli strain 536.</title>
        <authorList>
            <person name="Hochhut B."/>
            <person name="Wilde C."/>
            <person name="Balling G."/>
            <person name="Middendorf B."/>
            <person name="Dobrindt U."/>
            <person name="Brzuszkiewicz E."/>
            <person name="Gottschalk G."/>
            <person name="Carniel E."/>
            <person name="Hacker J."/>
        </authorList>
    </citation>
    <scope>NUCLEOTIDE SEQUENCE [LARGE SCALE GENOMIC DNA]</scope>
    <source>
        <strain>536 / UPEC</strain>
    </source>
</reference>
<gene>
    <name evidence="1" type="primary">rihB</name>
    <name type="ordered locus">ECP_2202</name>
</gene>
<keyword id="KW-0106">Calcium</keyword>
<keyword id="KW-0326">Glycosidase</keyword>
<keyword id="KW-0378">Hydrolase</keyword>
<keyword id="KW-0479">Metal-binding</keyword>
<comment type="function">
    <text evidence="1">Hydrolyzes cytidine or uridine to ribose and cytosine or uracil, respectively. Has a clear preference for cytidine over uridine. Strictly specific for ribonucleosides.</text>
</comment>
<comment type="catalytic activity">
    <reaction evidence="1">
        <text>a pyrimidine ribonucleoside + H2O = a pyrimidine nucleobase + D-ribose</text>
        <dbReference type="Rhea" id="RHEA:56816"/>
        <dbReference type="ChEBI" id="CHEBI:15377"/>
        <dbReference type="ChEBI" id="CHEBI:26432"/>
        <dbReference type="ChEBI" id="CHEBI:47013"/>
        <dbReference type="ChEBI" id="CHEBI:141014"/>
        <dbReference type="EC" id="3.2.2.8"/>
    </reaction>
</comment>
<comment type="cofactor">
    <cofactor evidence="1">
        <name>Ca(2+)</name>
        <dbReference type="ChEBI" id="CHEBI:29108"/>
    </cofactor>
    <text evidence="1">Binds 1 Ca(2+) ion per monomer.</text>
</comment>
<comment type="subunit">
    <text evidence="1">Homotetramer.</text>
</comment>
<comment type="similarity">
    <text evidence="1">Belongs to the IUNH family. RihB subfamily.</text>
</comment>